<gene>
    <name type="primary">arsC</name>
</gene>
<evidence type="ECO:0000250" key="1">
    <source>
        <dbReference type="UniProtKB" id="P08692"/>
    </source>
</evidence>
<evidence type="ECO:0000255" key="2">
    <source>
        <dbReference type="PROSITE-ProRule" id="PRU01282"/>
    </source>
</evidence>
<evidence type="ECO:0000305" key="3"/>
<feature type="chain" id="PRO_0000162535" description="Arsenate reductase">
    <location>
        <begin position="1"/>
        <end position="141"/>
    </location>
</feature>
<feature type="active site" description="Nucleophile; cysteine thioarsenate intermediate" evidence="1 2">
    <location>
        <position position="12"/>
    </location>
</feature>
<feature type="site" description="Important for activity" evidence="1">
    <location>
        <position position="8"/>
    </location>
</feature>
<feature type="site" description="Important for activity" evidence="1">
    <location>
        <position position="60"/>
    </location>
</feature>
<feature type="site" description="Important for activity" evidence="1">
    <location>
        <position position="94"/>
    </location>
</feature>
<feature type="site" description="Important for activity" evidence="1">
    <location>
        <position position="107"/>
    </location>
</feature>
<protein>
    <recommendedName>
        <fullName>Arsenate reductase</fullName>
        <ecNumber evidence="1">1.20.4.1</ecNumber>
    </recommendedName>
    <alternativeName>
        <fullName>Arsenical pump modifier</fullName>
    </alternativeName>
</protein>
<geneLocation type="plasmid">
    <name>pKW301</name>
</geneLocation>
<organism>
    <name type="scientific">Acidiphilium multivorum (strain DSM 11245 / JCM 8867 / NBRC 100883 / AIU 301)</name>
    <dbReference type="NCBI Taxonomy" id="926570"/>
    <lineage>
        <taxon>Bacteria</taxon>
        <taxon>Pseudomonadati</taxon>
        <taxon>Pseudomonadota</taxon>
        <taxon>Alphaproteobacteria</taxon>
        <taxon>Acetobacterales</taxon>
        <taxon>Acidocellaceae</taxon>
        <taxon>Acidiphilium</taxon>
    </lineage>
</organism>
<sequence>MSNITIYHNPACGTSRNTLEMIRNSGNEPTVIHYLENPPSRDELVKLIADMGISVRALLRKNVEPYEELGLEEDKFTDDQLIDFMLQHPILINRPIVVTPLGTRLCRPSEVVLDILPDAQKGAFAKEDGEKVVDEAGKRLK</sequence>
<accession>O50595</accession>
<name>ARSC_ACIMA</name>
<comment type="function">
    <text evidence="1">Involved in resistance to arsenate. Catalyzes the reduction of arsenate [As(V)] to arsenite [As(III)].</text>
</comment>
<comment type="catalytic activity">
    <reaction evidence="1">
        <text>[glutaredoxin]-dithiol + arsenate + glutathione + H(+) = glutathionyl-S-S-[glutaredoxin] + arsenite + H2O</text>
        <dbReference type="Rhea" id="RHEA:22016"/>
        <dbReference type="Rhea" id="RHEA-COMP:10729"/>
        <dbReference type="Rhea" id="RHEA-COMP:17668"/>
        <dbReference type="ChEBI" id="CHEBI:15377"/>
        <dbReference type="ChEBI" id="CHEBI:15378"/>
        <dbReference type="ChEBI" id="CHEBI:29242"/>
        <dbReference type="ChEBI" id="CHEBI:29950"/>
        <dbReference type="ChEBI" id="CHEBI:48597"/>
        <dbReference type="ChEBI" id="CHEBI:57925"/>
        <dbReference type="ChEBI" id="CHEBI:146199"/>
        <dbReference type="EC" id="1.20.4.1"/>
    </reaction>
</comment>
<comment type="similarity">
    <text evidence="3">Belongs to the ArsC family.</text>
</comment>
<dbReference type="EC" id="1.20.4.1" evidence="1"/>
<dbReference type="EMBL" id="AB004659">
    <property type="protein sequence ID" value="BAA24824.1"/>
    <property type="molecule type" value="Genomic_DNA"/>
</dbReference>
<dbReference type="SMR" id="O50595"/>
<dbReference type="GO" id="GO:0008794">
    <property type="term" value="F:arsenate reductase (glutaredoxin) activity"/>
    <property type="evidence" value="ECO:0007669"/>
    <property type="project" value="UniProtKB-EC"/>
</dbReference>
<dbReference type="GO" id="GO:0046685">
    <property type="term" value="P:response to arsenic-containing substance"/>
    <property type="evidence" value="ECO:0007669"/>
    <property type="project" value="UniProtKB-KW"/>
</dbReference>
<dbReference type="CDD" id="cd03034">
    <property type="entry name" value="ArsC_ArsC"/>
    <property type="match status" value="1"/>
</dbReference>
<dbReference type="FunFam" id="3.40.30.10:FF:000048">
    <property type="entry name" value="Arsenate reductase"/>
    <property type="match status" value="1"/>
</dbReference>
<dbReference type="Gene3D" id="3.40.30.10">
    <property type="entry name" value="Glutaredoxin"/>
    <property type="match status" value="1"/>
</dbReference>
<dbReference type="InterPro" id="IPR006659">
    <property type="entry name" value="Arsenate_reductase"/>
</dbReference>
<dbReference type="InterPro" id="IPR006660">
    <property type="entry name" value="Arsenate_reductase-like"/>
</dbReference>
<dbReference type="InterPro" id="IPR036249">
    <property type="entry name" value="Thioredoxin-like_sf"/>
</dbReference>
<dbReference type="NCBIfam" id="TIGR00014">
    <property type="entry name" value="arsC"/>
    <property type="match status" value="1"/>
</dbReference>
<dbReference type="NCBIfam" id="NF007456">
    <property type="entry name" value="PRK10026.1"/>
    <property type="match status" value="1"/>
</dbReference>
<dbReference type="PANTHER" id="PTHR30041">
    <property type="entry name" value="ARSENATE REDUCTASE"/>
    <property type="match status" value="1"/>
</dbReference>
<dbReference type="PANTHER" id="PTHR30041:SF5">
    <property type="entry name" value="ARSENATE REDUCTASE-RELATED"/>
    <property type="match status" value="1"/>
</dbReference>
<dbReference type="Pfam" id="PF03960">
    <property type="entry name" value="ArsC"/>
    <property type="match status" value="1"/>
</dbReference>
<dbReference type="SUPFAM" id="SSF52833">
    <property type="entry name" value="Thioredoxin-like"/>
    <property type="match status" value="1"/>
</dbReference>
<dbReference type="PROSITE" id="PS51353">
    <property type="entry name" value="ARSC"/>
    <property type="match status" value="1"/>
</dbReference>
<proteinExistence type="inferred from homology"/>
<keyword id="KW-0059">Arsenical resistance</keyword>
<keyword id="KW-0560">Oxidoreductase</keyword>
<keyword id="KW-0614">Plasmid</keyword>
<reference key="1">
    <citation type="journal article" date="1998" name="Appl. Environ. Microbiol.">
        <title>Expression and regulation of the arsenic resistance operon of Acidiphilium multivorum AIU 301 plasmid pKW301 in Escherichia coli.</title>
        <authorList>
            <person name="Suzuki K."/>
            <person name="Wakao N."/>
            <person name="Kimura T."/>
            <person name="Sakka K."/>
            <person name="Ohmiya K."/>
        </authorList>
    </citation>
    <scope>NUCLEOTIDE SEQUENCE [GENOMIC DNA]</scope>
    <source>
        <strain>DSM 11245 / JCM 8867 / NBRC 100883 / AIU 301</strain>
    </source>
</reference>